<organism>
    <name type="scientific">Enterobacter sp. (strain 638)</name>
    <dbReference type="NCBI Taxonomy" id="399742"/>
    <lineage>
        <taxon>Bacteria</taxon>
        <taxon>Pseudomonadati</taxon>
        <taxon>Pseudomonadota</taxon>
        <taxon>Gammaproteobacteria</taxon>
        <taxon>Enterobacterales</taxon>
        <taxon>Enterobacteriaceae</taxon>
        <taxon>Enterobacter</taxon>
    </lineage>
</organism>
<gene>
    <name evidence="1" type="primary">csrA</name>
    <name type="ordered locus">Ent638_3171</name>
</gene>
<name>CSRA_ENT38</name>
<feature type="chain" id="PRO_1000058270" description="Translational regulator CsrA">
    <location>
        <begin position="1"/>
        <end position="61"/>
    </location>
</feature>
<proteinExistence type="inferred from homology"/>
<accession>A4WDQ5</accession>
<comment type="function">
    <text evidence="1">A key translational regulator that binds mRNA to regulate translation initiation and/or mRNA stability. Mediates global changes in gene expression, shifting from rapid growth to stress survival by linking envelope stress, the stringent response and the catabolite repression systems. Usually binds in the 5'-UTR; binding at or near the Shine-Dalgarno sequence prevents ribosome-binding, repressing translation, binding elsewhere in the 5'-UTR can activate translation and/or stabilize the mRNA. Its function is antagonized by small RNA(s).</text>
</comment>
<comment type="subunit">
    <text evidence="1">Homodimer; the beta-strands of each monomer intercalate to form a hydrophobic core, while the alpha-helices form wings that extend away from the core.</text>
</comment>
<comment type="subcellular location">
    <subcellularLocation>
        <location evidence="1">Cytoplasm</location>
    </subcellularLocation>
</comment>
<comment type="similarity">
    <text evidence="1">Belongs to the CsrA/RsmA family.</text>
</comment>
<sequence length="61" mass="6856">MLILTRRVGETLMIGDEVTVTVLGVKGNQVRIGVNAPKEVSVHREEIYQRIQAEKSQQSSY</sequence>
<keyword id="KW-0010">Activator</keyword>
<keyword id="KW-0963">Cytoplasm</keyword>
<keyword id="KW-0678">Repressor</keyword>
<keyword id="KW-0694">RNA-binding</keyword>
<keyword id="KW-0810">Translation regulation</keyword>
<evidence type="ECO:0000255" key="1">
    <source>
        <dbReference type="HAMAP-Rule" id="MF_00167"/>
    </source>
</evidence>
<reference key="1">
    <citation type="journal article" date="2010" name="PLoS Genet.">
        <title>Genome sequence of the plant growth promoting endophytic bacterium Enterobacter sp. 638.</title>
        <authorList>
            <person name="Taghavi S."/>
            <person name="van der Lelie D."/>
            <person name="Hoffman A."/>
            <person name="Zhang Y.B."/>
            <person name="Walla M.D."/>
            <person name="Vangronsveld J."/>
            <person name="Newman L."/>
            <person name="Monchy S."/>
        </authorList>
    </citation>
    <scope>NUCLEOTIDE SEQUENCE [LARGE SCALE GENOMIC DNA]</scope>
    <source>
        <strain>638</strain>
    </source>
</reference>
<protein>
    <recommendedName>
        <fullName evidence="1">Translational regulator CsrA</fullName>
    </recommendedName>
    <alternativeName>
        <fullName evidence="1">Carbon storage regulator</fullName>
    </alternativeName>
</protein>
<dbReference type="EMBL" id="CP000653">
    <property type="protein sequence ID" value="ABP61835.1"/>
    <property type="molecule type" value="Genomic_DNA"/>
</dbReference>
<dbReference type="RefSeq" id="WP_000906486.1">
    <property type="nucleotide sequence ID" value="NC_009436.1"/>
</dbReference>
<dbReference type="BMRB" id="A4WDQ5"/>
<dbReference type="SMR" id="A4WDQ5"/>
<dbReference type="STRING" id="399742.Ent638_3171"/>
<dbReference type="GeneID" id="98389839"/>
<dbReference type="KEGG" id="ent:Ent638_3171"/>
<dbReference type="eggNOG" id="COG1551">
    <property type="taxonomic scope" value="Bacteria"/>
</dbReference>
<dbReference type="HOGENOM" id="CLU_164837_2_1_6"/>
<dbReference type="OrthoDB" id="9809061at2"/>
<dbReference type="Proteomes" id="UP000000230">
    <property type="component" value="Chromosome"/>
</dbReference>
<dbReference type="GO" id="GO:0005829">
    <property type="term" value="C:cytosol"/>
    <property type="evidence" value="ECO:0007669"/>
    <property type="project" value="TreeGrafter"/>
</dbReference>
<dbReference type="GO" id="GO:0048027">
    <property type="term" value="F:mRNA 5'-UTR binding"/>
    <property type="evidence" value="ECO:0007669"/>
    <property type="project" value="UniProtKB-UniRule"/>
</dbReference>
<dbReference type="GO" id="GO:0006402">
    <property type="term" value="P:mRNA catabolic process"/>
    <property type="evidence" value="ECO:0007669"/>
    <property type="project" value="InterPro"/>
</dbReference>
<dbReference type="GO" id="GO:0045947">
    <property type="term" value="P:negative regulation of translational initiation"/>
    <property type="evidence" value="ECO:0007669"/>
    <property type="project" value="UniProtKB-UniRule"/>
</dbReference>
<dbReference type="GO" id="GO:0045948">
    <property type="term" value="P:positive regulation of translational initiation"/>
    <property type="evidence" value="ECO:0007669"/>
    <property type="project" value="UniProtKB-UniRule"/>
</dbReference>
<dbReference type="GO" id="GO:0006109">
    <property type="term" value="P:regulation of carbohydrate metabolic process"/>
    <property type="evidence" value="ECO:0007669"/>
    <property type="project" value="UniProtKB-UniRule"/>
</dbReference>
<dbReference type="FunFam" id="2.60.40.4380:FF:000001">
    <property type="entry name" value="Translational regulator CsrA"/>
    <property type="match status" value="1"/>
</dbReference>
<dbReference type="Gene3D" id="2.60.40.4380">
    <property type="entry name" value="Translational regulator CsrA"/>
    <property type="match status" value="1"/>
</dbReference>
<dbReference type="HAMAP" id="MF_00167">
    <property type="entry name" value="CsrA"/>
    <property type="match status" value="1"/>
</dbReference>
<dbReference type="InterPro" id="IPR003751">
    <property type="entry name" value="CsrA"/>
</dbReference>
<dbReference type="InterPro" id="IPR036107">
    <property type="entry name" value="CsrA_sf"/>
</dbReference>
<dbReference type="NCBIfam" id="TIGR00202">
    <property type="entry name" value="csrA"/>
    <property type="match status" value="1"/>
</dbReference>
<dbReference type="NCBIfam" id="NF002469">
    <property type="entry name" value="PRK01712.1"/>
    <property type="match status" value="1"/>
</dbReference>
<dbReference type="PANTHER" id="PTHR34984">
    <property type="entry name" value="CARBON STORAGE REGULATOR"/>
    <property type="match status" value="1"/>
</dbReference>
<dbReference type="PANTHER" id="PTHR34984:SF1">
    <property type="entry name" value="CARBON STORAGE REGULATOR"/>
    <property type="match status" value="1"/>
</dbReference>
<dbReference type="Pfam" id="PF02599">
    <property type="entry name" value="CsrA"/>
    <property type="match status" value="1"/>
</dbReference>
<dbReference type="SUPFAM" id="SSF117130">
    <property type="entry name" value="CsrA-like"/>
    <property type="match status" value="1"/>
</dbReference>